<proteinExistence type="inferred from homology"/>
<evidence type="ECO:0000255" key="1">
    <source>
        <dbReference type="HAMAP-Rule" id="MF_00408"/>
    </source>
</evidence>
<comment type="function">
    <text evidence="1">General factor that plays a role in the activation of archaeal genes transcribed by RNA polymerase. Binds specifically to the TATA box promoter element which lies close to the position of transcription initiation.</text>
</comment>
<comment type="similarity">
    <text evidence="1">Belongs to the TBP family.</text>
</comment>
<protein>
    <recommendedName>
        <fullName evidence="1">TATA-box-binding protein 2</fullName>
    </recommendedName>
    <alternativeName>
        <fullName evidence="1">Box A-binding protein 2</fullName>
        <shortName evidence="1">BAP 2</shortName>
    </alternativeName>
    <alternativeName>
        <fullName evidence="1">TATA sequence-binding protein 2</fullName>
        <shortName evidence="1">TBP 2</shortName>
    </alternativeName>
    <alternativeName>
        <fullName evidence="1">TATA-box factor 2</fullName>
    </alternativeName>
</protein>
<sequence>MEPTITIENIVASTRLAEDFDLQKLLDTGLKGAVYNKNKFPGLVYRIENPKAAFLIFASGKVVCTGTKNVENSRIALFNLANELNSIGYKGIYLKPEIHVQNVVASANLRTSLNLNAVLSAFGVENVEYEPEVFPGLVYKLADPRVVVLVFRTGKLVITGGKCPEDCEEGLRIIKTQLDNLGLLY</sequence>
<feature type="chain" id="PRO_0000154006" description="TATA-box-binding protein 2">
    <location>
        <begin position="1"/>
        <end position="185"/>
    </location>
</feature>
<feature type="repeat" description="1">
    <location>
        <begin position="7"/>
        <end position="84"/>
    </location>
</feature>
<feature type="repeat" description="2">
    <location>
        <begin position="100"/>
        <end position="178"/>
    </location>
</feature>
<keyword id="KW-0238">DNA-binding</keyword>
<keyword id="KW-1185">Reference proteome</keyword>
<keyword id="KW-0677">Repeat</keyword>
<keyword id="KW-0804">Transcription</keyword>
<keyword id="KW-0805">Transcription regulation</keyword>
<accession>Q8TU94</accession>
<reference key="1">
    <citation type="journal article" date="2002" name="Genome Res.">
        <title>The genome of Methanosarcina acetivorans reveals extensive metabolic and physiological diversity.</title>
        <authorList>
            <person name="Galagan J.E."/>
            <person name="Nusbaum C."/>
            <person name="Roy A."/>
            <person name="Endrizzi M.G."/>
            <person name="Macdonald P."/>
            <person name="FitzHugh W."/>
            <person name="Calvo S."/>
            <person name="Engels R."/>
            <person name="Smirnov S."/>
            <person name="Atnoor D."/>
            <person name="Brown A."/>
            <person name="Allen N."/>
            <person name="Naylor J."/>
            <person name="Stange-Thomann N."/>
            <person name="DeArellano K."/>
            <person name="Johnson R."/>
            <person name="Linton L."/>
            <person name="McEwan P."/>
            <person name="McKernan K."/>
            <person name="Talamas J."/>
            <person name="Tirrell A."/>
            <person name="Ye W."/>
            <person name="Zimmer A."/>
            <person name="Barber R.D."/>
            <person name="Cann I."/>
            <person name="Graham D.E."/>
            <person name="Grahame D.A."/>
            <person name="Guss A.M."/>
            <person name="Hedderich R."/>
            <person name="Ingram-Smith C."/>
            <person name="Kuettner H.C."/>
            <person name="Krzycki J.A."/>
            <person name="Leigh J.A."/>
            <person name="Li W."/>
            <person name="Liu J."/>
            <person name="Mukhopadhyay B."/>
            <person name="Reeve J.N."/>
            <person name="Smith K."/>
            <person name="Springer T.A."/>
            <person name="Umayam L.A."/>
            <person name="White O."/>
            <person name="White R.H."/>
            <person name="de Macario E.C."/>
            <person name="Ferry J.G."/>
            <person name="Jarrell K.F."/>
            <person name="Jing H."/>
            <person name="Macario A.J.L."/>
            <person name="Paulsen I.T."/>
            <person name="Pritchett M."/>
            <person name="Sowers K.R."/>
            <person name="Swanson R.V."/>
            <person name="Zinder S.H."/>
            <person name="Lander E."/>
            <person name="Metcalf W.W."/>
            <person name="Birren B."/>
        </authorList>
    </citation>
    <scope>NUCLEOTIDE SEQUENCE [LARGE SCALE GENOMIC DNA]</scope>
    <source>
        <strain>ATCC 35395 / DSM 2834 / JCM 12185 / C2A</strain>
    </source>
</reference>
<gene>
    <name evidence="1" type="primary">tbp2</name>
    <name type="synonym">tbp-2</name>
    <name type="ordered locus">MA_0179</name>
</gene>
<dbReference type="EMBL" id="AE010299">
    <property type="protein sequence ID" value="AAM03632.1"/>
    <property type="molecule type" value="Genomic_DNA"/>
</dbReference>
<dbReference type="RefSeq" id="WP_011020237.1">
    <property type="nucleotide sequence ID" value="NC_003552.1"/>
</dbReference>
<dbReference type="SMR" id="Q8TU94"/>
<dbReference type="FunCoup" id="Q8TU94">
    <property type="interactions" value="144"/>
</dbReference>
<dbReference type="STRING" id="188937.MA_0179"/>
<dbReference type="EnsemblBacteria" id="AAM03632">
    <property type="protein sequence ID" value="AAM03632"/>
    <property type="gene ID" value="MA_0179"/>
</dbReference>
<dbReference type="GeneID" id="1472071"/>
<dbReference type="KEGG" id="mac:MA_0179"/>
<dbReference type="HOGENOM" id="CLU_060161_4_3_2"/>
<dbReference type="InParanoid" id="Q8TU94"/>
<dbReference type="OrthoDB" id="350539at2157"/>
<dbReference type="PhylomeDB" id="Q8TU94"/>
<dbReference type="Proteomes" id="UP000002487">
    <property type="component" value="Chromosome"/>
</dbReference>
<dbReference type="GO" id="GO:0003677">
    <property type="term" value="F:DNA binding"/>
    <property type="evidence" value="ECO:0007669"/>
    <property type="project" value="UniProtKB-KW"/>
</dbReference>
<dbReference type="GO" id="GO:0003700">
    <property type="term" value="F:DNA-binding transcription factor activity"/>
    <property type="evidence" value="ECO:0007669"/>
    <property type="project" value="UniProtKB-UniRule"/>
</dbReference>
<dbReference type="GO" id="GO:0140223">
    <property type="term" value="F:general transcription initiation factor activity"/>
    <property type="evidence" value="ECO:0000318"/>
    <property type="project" value="GO_Central"/>
</dbReference>
<dbReference type="GO" id="GO:0006352">
    <property type="term" value="P:DNA-templated transcription initiation"/>
    <property type="evidence" value="ECO:0000318"/>
    <property type="project" value="GO_Central"/>
</dbReference>
<dbReference type="FunFam" id="3.30.310.10:FF:000007">
    <property type="entry name" value="TATA-box-binding protein"/>
    <property type="match status" value="1"/>
</dbReference>
<dbReference type="Gene3D" id="3.30.310.10">
    <property type="entry name" value="TATA-Binding Protein"/>
    <property type="match status" value="2"/>
</dbReference>
<dbReference type="HAMAP" id="MF_00408">
    <property type="entry name" value="TATA_bind_prot_arch"/>
    <property type="match status" value="1"/>
</dbReference>
<dbReference type="InterPro" id="IPR000814">
    <property type="entry name" value="TBP"/>
</dbReference>
<dbReference type="InterPro" id="IPR030491">
    <property type="entry name" value="TBP_CS"/>
</dbReference>
<dbReference type="InterPro" id="IPR012295">
    <property type="entry name" value="TBP_dom_sf"/>
</dbReference>
<dbReference type="NCBIfam" id="NF001599">
    <property type="entry name" value="PRK00394.2-4"/>
    <property type="match status" value="1"/>
</dbReference>
<dbReference type="PANTHER" id="PTHR10126">
    <property type="entry name" value="TATA-BOX BINDING PROTEIN"/>
    <property type="match status" value="1"/>
</dbReference>
<dbReference type="Pfam" id="PF00352">
    <property type="entry name" value="TBP"/>
    <property type="match status" value="2"/>
</dbReference>
<dbReference type="PRINTS" id="PR00686">
    <property type="entry name" value="TIFACTORIID"/>
</dbReference>
<dbReference type="SUPFAM" id="SSF55945">
    <property type="entry name" value="TATA-box binding protein-like"/>
    <property type="match status" value="2"/>
</dbReference>
<dbReference type="PROSITE" id="PS00351">
    <property type="entry name" value="TFIID"/>
    <property type="match status" value="2"/>
</dbReference>
<organism>
    <name type="scientific">Methanosarcina acetivorans (strain ATCC 35395 / DSM 2834 / JCM 12185 / C2A)</name>
    <dbReference type="NCBI Taxonomy" id="188937"/>
    <lineage>
        <taxon>Archaea</taxon>
        <taxon>Methanobacteriati</taxon>
        <taxon>Methanobacteriota</taxon>
        <taxon>Stenosarchaea group</taxon>
        <taxon>Methanomicrobia</taxon>
        <taxon>Methanosarcinales</taxon>
        <taxon>Methanosarcinaceae</taxon>
        <taxon>Methanosarcina</taxon>
    </lineage>
</organism>
<name>TBP2_METAC</name>